<feature type="signal peptide" evidence="2">
    <location>
        <begin position="1"/>
        <end position="20"/>
    </location>
</feature>
<feature type="chain" id="PRO_0000259989" description="Putative protein-disulfide oxidoreductase RBE_1288">
    <location>
        <begin position="21"/>
        <end position="259"/>
    </location>
</feature>
<feature type="domain" description="Thioredoxin" evidence="3">
    <location>
        <begin position="47"/>
        <end position="251"/>
    </location>
</feature>
<feature type="region of interest" description="Disordered" evidence="4">
    <location>
        <begin position="25"/>
        <end position="54"/>
    </location>
</feature>
<feature type="compositionally biased region" description="Polar residues" evidence="4">
    <location>
        <begin position="33"/>
        <end position="42"/>
    </location>
</feature>
<feature type="compositionally biased region" description="Low complexity" evidence="4">
    <location>
        <begin position="43"/>
        <end position="54"/>
    </location>
</feature>
<feature type="disulfide bond" description="Redox-active" evidence="3">
    <location>
        <begin position="104"/>
        <end position="107"/>
    </location>
</feature>
<sequence length="259" mass="29178">MRNSFITLIFLLLLSGCSEEKEKVVEQESSESITPAQASTSDENNNQTTETTTPAVITPAVQEQIEQKPEVKTFKVTFKIDENDMVLGNKDSKIVVVEYFSPTCPHCAYYHSTIFPELKQKYIDTNKIAYVTREFIATKQDLDASILARCKGDINSFMLFHDIILKQQDKWSVSNKYRELLTDIGQLGGVTPEEYKKCLSDDKITETLIANTNFITKAPKFIGTPSFFVNGVQTENYSINSISAAIDKAIEESKNKIDL</sequence>
<gene>
    <name type="ordered locus">RBE_1288</name>
</gene>
<proteinExistence type="inferred from homology"/>
<reference key="1">
    <citation type="journal article" date="2006" name="PLoS Genet.">
        <title>Genome sequence of Rickettsia bellii illuminates the role of amoebae in gene exchanges between intracellular pathogens.</title>
        <authorList>
            <person name="Ogata H."/>
            <person name="La Scola B."/>
            <person name="Audic S."/>
            <person name="Renesto P."/>
            <person name="Blanc G."/>
            <person name="Robert C."/>
            <person name="Fournier P.-E."/>
            <person name="Claverie J.-M."/>
            <person name="Raoult D."/>
        </authorList>
    </citation>
    <scope>NUCLEOTIDE SEQUENCE [LARGE SCALE GENOMIC DNA]</scope>
    <source>
        <strain>RML369-C</strain>
    </source>
</reference>
<dbReference type="EC" id="1.8.-.-"/>
<dbReference type="EMBL" id="CP000087">
    <property type="protein sequence ID" value="ABE05369.1"/>
    <property type="molecule type" value="Genomic_DNA"/>
</dbReference>
<dbReference type="RefSeq" id="WP_011477939.1">
    <property type="nucleotide sequence ID" value="NC_007940.1"/>
</dbReference>
<dbReference type="SMR" id="Q1RGZ5"/>
<dbReference type="KEGG" id="rbe:RBE_1288"/>
<dbReference type="eggNOG" id="COG1651">
    <property type="taxonomic scope" value="Bacteria"/>
</dbReference>
<dbReference type="HOGENOM" id="CLU_1022630_0_0_5"/>
<dbReference type="OrthoDB" id="8478320at2"/>
<dbReference type="Proteomes" id="UP000001951">
    <property type="component" value="Chromosome"/>
</dbReference>
<dbReference type="GO" id="GO:0042597">
    <property type="term" value="C:periplasmic space"/>
    <property type="evidence" value="ECO:0007669"/>
    <property type="project" value="UniProtKB-SubCell"/>
</dbReference>
<dbReference type="GO" id="GO:0015036">
    <property type="term" value="F:disulfide oxidoreductase activity"/>
    <property type="evidence" value="ECO:0007669"/>
    <property type="project" value="UniProtKB-ARBA"/>
</dbReference>
<dbReference type="Gene3D" id="3.40.30.10">
    <property type="entry name" value="Glutaredoxin"/>
    <property type="match status" value="1"/>
</dbReference>
<dbReference type="InterPro" id="IPR012336">
    <property type="entry name" value="Thioredoxin-like_fold"/>
</dbReference>
<dbReference type="InterPro" id="IPR036249">
    <property type="entry name" value="Thioredoxin-like_sf"/>
</dbReference>
<dbReference type="InterPro" id="IPR017937">
    <property type="entry name" value="Thioredoxin_CS"/>
</dbReference>
<dbReference type="InterPro" id="IPR013766">
    <property type="entry name" value="Thioredoxin_domain"/>
</dbReference>
<dbReference type="PANTHER" id="PTHR13887">
    <property type="entry name" value="GLUTATHIONE S-TRANSFERASE KAPPA"/>
    <property type="match status" value="1"/>
</dbReference>
<dbReference type="PANTHER" id="PTHR13887:SF56">
    <property type="entry name" value="THIOREDOXIN-LIKE REDUCTASE RV2466C"/>
    <property type="match status" value="1"/>
</dbReference>
<dbReference type="Pfam" id="PF13462">
    <property type="entry name" value="Thioredoxin_4"/>
    <property type="match status" value="1"/>
</dbReference>
<dbReference type="SUPFAM" id="SSF52833">
    <property type="entry name" value="Thioredoxin-like"/>
    <property type="match status" value="1"/>
</dbReference>
<dbReference type="PROSITE" id="PS00194">
    <property type="entry name" value="THIOREDOXIN_1"/>
    <property type="match status" value="1"/>
</dbReference>
<dbReference type="PROSITE" id="PS51352">
    <property type="entry name" value="THIOREDOXIN_2"/>
    <property type="match status" value="1"/>
</dbReference>
<keyword id="KW-1015">Disulfide bond</keyword>
<keyword id="KW-0560">Oxidoreductase</keyword>
<keyword id="KW-0574">Periplasm</keyword>
<keyword id="KW-0676">Redox-active center</keyword>
<keyword id="KW-0732">Signal</keyword>
<evidence type="ECO:0000250" key="1"/>
<evidence type="ECO:0000255" key="2"/>
<evidence type="ECO:0000255" key="3">
    <source>
        <dbReference type="PROSITE-ProRule" id="PRU00691"/>
    </source>
</evidence>
<evidence type="ECO:0000256" key="4">
    <source>
        <dbReference type="SAM" id="MobiDB-lite"/>
    </source>
</evidence>
<evidence type="ECO:0000305" key="5"/>
<accession>Q1RGZ5</accession>
<name>DSB_RICBR</name>
<organism>
    <name type="scientific">Rickettsia bellii (strain RML369-C)</name>
    <dbReference type="NCBI Taxonomy" id="336407"/>
    <lineage>
        <taxon>Bacteria</taxon>
        <taxon>Pseudomonadati</taxon>
        <taxon>Pseudomonadota</taxon>
        <taxon>Alphaproteobacteria</taxon>
        <taxon>Rickettsiales</taxon>
        <taxon>Rickettsiaceae</taxon>
        <taxon>Rickettsieae</taxon>
        <taxon>Rickettsia</taxon>
        <taxon>belli group</taxon>
    </lineage>
</organism>
<protein>
    <recommendedName>
        <fullName>Putative protein-disulfide oxidoreductase RBE_1288</fullName>
        <ecNumber>1.8.-.-</ecNumber>
    </recommendedName>
</protein>
<comment type="function">
    <text evidence="1">May be required for disulfide bond formation in some proteins.</text>
</comment>
<comment type="subcellular location">
    <subcellularLocation>
        <location evidence="1">Periplasm</location>
    </subcellularLocation>
</comment>
<comment type="similarity">
    <text evidence="5">Belongs to the thioredoxin family. DsbA subfamily.</text>
</comment>